<evidence type="ECO:0000250" key="1">
    <source>
        <dbReference type="UniProtKB" id="P24385"/>
    </source>
</evidence>
<evidence type="ECO:0000250" key="2">
    <source>
        <dbReference type="UniProtKB" id="P25322"/>
    </source>
</evidence>
<evidence type="ECO:0000256" key="3">
    <source>
        <dbReference type="SAM" id="MobiDB-lite"/>
    </source>
</evidence>
<evidence type="ECO:0000305" key="4"/>
<proteinExistence type="evidence at transcript level"/>
<protein>
    <recommendedName>
        <fullName>G1/S-specific cyclin-D1</fullName>
    </recommendedName>
</protein>
<sequence length="295" mass="33407">MAHQLLCCEMETIRRAYPDANLLNDRVLRAMLKAEETCAPSVSYFKCVQKEILPSMRKIVATWMLEVCEEQKCEEEVFPLAMNYLDRFLSLEPVKKSRLQLLGATCMFVASKMKETIPLTAEKLCIYTDNSIRPDELLHMELVLVNKLKWNLAAMTPHDFIEHFLSKMPVAEENKQIIRKHAQTFVALCATDVKFISNPPSMVAAGSVAAAAQGLHLGSANGFLSYHRLTRFLSKVIRCDPDCLRACQEQIEALLESSLRQAQQQNLDPKAAEEEEEEEEVDLACTPTDVRDVNI</sequence>
<feature type="chain" id="PRO_0000244461" description="G1/S-specific cyclin-D1">
    <location>
        <begin position="1"/>
        <end position="295"/>
    </location>
</feature>
<feature type="domain" description="Cyclin N-terminal">
    <location>
        <begin position="28"/>
        <end position="152"/>
    </location>
</feature>
<feature type="region of interest" description="Disordered" evidence="3">
    <location>
        <begin position="264"/>
        <end position="295"/>
    </location>
</feature>
<feature type="compositionally biased region" description="Acidic residues" evidence="3">
    <location>
        <begin position="273"/>
        <end position="282"/>
    </location>
</feature>
<feature type="modified residue" description="Phosphothreonine" evidence="1">
    <location>
        <position position="286"/>
    </location>
</feature>
<feature type="cross-link" description="Glycyl lysine isopeptide (Lys-Gly) (interchain with G-Cter in ubiquitin)" evidence="2">
    <location>
        <position position="270"/>
    </location>
</feature>
<comment type="function">
    <text evidence="1">Regulatory component of the cyclin D1-CDK4 (DC) complex that phosphorylates and inhibits members of the retinoblastoma (RB) protein family including RB1 and regulates the cell-cycle during G(1)/S transition. Phosphorylation of RB1 allows dissociation of the transcription factor E2F from the RB/E2F complex and the subsequent transcription of E2F target genes which are responsible for the progression through the G(1) phase. Hypophosphorylates RB1 in early G(1) phase. Cyclin D-CDK4 complexes are major integrators of various mitogenenic and antimitogenic signals. Also a substrate for SMAD3, phosphorylating SMAD3 in a cell-cycle-dependent manner and repressing its transcriptional activity. Component of the ternary complex, cyclin D1/CDK4/CDKN1B, required for nuclear translocation and activity of the cyclin D-CDK4 complex. Exhibits transcriptional corepressor activity with INSM1 on the NEUROD1 and INS promoters in a cell cycle-independent manner.</text>
</comment>
<comment type="subunit">
    <text evidence="1 2">Interacts with either CDK4 or CDK6 protein kinase to form a serine/threonine kinase holoenzyme complex. The cyclin subunit imparts substrate specificity to the complex. Component of the ternary complex CCND1/CDK4/CDKN1B required for nuclear translocation and modulation of CDK4-mediated kinase activity (By similarity). Interacts directly with CDKN1B. Can form similar complexes with either CDKN1A or CDKN2A. Interacts with UHRF2; the interaction ubiquitinates CCND1 and appears to occur independently of phosphorylation. Interacts with USP2. Interacts (via cyclin N-terminal domain) with INSM1 (via N-terminal region); the interaction competes with the binding of CCND1 to CDK4 during cell cycle progression and inhibits CDK4 activity. Interacts with CDK4; the interaction is prevented with the binding of CCND1 to INSM1 during cell cycle progression (By similarity).</text>
</comment>
<comment type="subcellular location">
    <subcellularLocation>
        <location evidence="1">Nucleus</location>
    </subcellularLocation>
    <subcellularLocation>
        <location evidence="1">Cytoplasm</location>
    </subcellularLocation>
    <subcellularLocation>
        <location evidence="1">Nucleus membrane</location>
    </subcellularLocation>
    <text evidence="1">Cyclin D-CDK4 complexes accumulate at the nuclear membrane and are then translocated into the nucleus through interaction with KIP/CIP family members.</text>
</comment>
<comment type="PTM">
    <text evidence="1">Phosphorylation at Thr-286 by MAP kinases is required for ubiquitination and degradation by the DCX(AMBRA1) complex. It also plays an essential role for recognition by the FBXO31 component of SCF (SKP1-cullin-F-box) protein ligase complex following DNA damage.</text>
</comment>
<comment type="PTM">
    <text evidence="1 2">Ubiquitinated at Lys-270 by the DCX(AMBRA1) complex during the transition from G1 to S cell phase, leading to its degradation: ubiquitination is dependent on Thr-286 phosphorylation. The DCX(AMBRA1) complex represents the major regulator of CCND1 stability during the G1/S transition (By similarity). Also ubiquitinated by the SCF(FBXO4) and Cul7-RING(FBXW8) ubiquitin-protein ligase complexes (By similarity). Following DNA damage it is ubiquitinated by the SCF(FBXO31) protein ligase complex. SCF(FBXO31) ubiquitination is dependent on Thr-286 phosphorylation. Ubiquitinated also by UHRF2 apparently in a phosphorylation-independent manner. Ubiquitination leads to its degradation and G1 arrest. Deubiquitinated by USP2; leading to its stabilization (By similarity).</text>
</comment>
<comment type="similarity">
    <text evidence="4">Belongs to the cyclin family. Cyclin D subfamily.</text>
</comment>
<gene>
    <name type="primary">CCND1</name>
</gene>
<accession>Q2KI22</accession>
<reference key="1">
    <citation type="submission" date="2006-01" db="EMBL/GenBank/DDBJ databases">
        <authorList>
            <consortium name="NIH - Mammalian Gene Collection (MGC) project"/>
        </authorList>
    </citation>
    <scope>NUCLEOTIDE SEQUENCE [LARGE SCALE MRNA]</scope>
    <source>
        <strain>Hereford</strain>
        <tissue>Hypothalamus</tissue>
    </source>
</reference>
<organism>
    <name type="scientific">Bos taurus</name>
    <name type="common">Bovine</name>
    <dbReference type="NCBI Taxonomy" id="9913"/>
    <lineage>
        <taxon>Eukaryota</taxon>
        <taxon>Metazoa</taxon>
        <taxon>Chordata</taxon>
        <taxon>Craniata</taxon>
        <taxon>Vertebrata</taxon>
        <taxon>Euteleostomi</taxon>
        <taxon>Mammalia</taxon>
        <taxon>Eutheria</taxon>
        <taxon>Laurasiatheria</taxon>
        <taxon>Artiodactyla</taxon>
        <taxon>Ruminantia</taxon>
        <taxon>Pecora</taxon>
        <taxon>Bovidae</taxon>
        <taxon>Bovinae</taxon>
        <taxon>Bos</taxon>
    </lineage>
</organism>
<name>CCND1_BOVIN</name>
<keyword id="KW-0131">Cell cycle</keyword>
<keyword id="KW-0132">Cell division</keyword>
<keyword id="KW-0195">Cyclin</keyword>
<keyword id="KW-0963">Cytoplasm</keyword>
<keyword id="KW-1017">Isopeptide bond</keyword>
<keyword id="KW-0472">Membrane</keyword>
<keyword id="KW-0539">Nucleus</keyword>
<keyword id="KW-0597">Phosphoprotein</keyword>
<keyword id="KW-1185">Reference proteome</keyword>
<keyword id="KW-0678">Repressor</keyword>
<keyword id="KW-0804">Transcription</keyword>
<keyword id="KW-0805">Transcription regulation</keyword>
<keyword id="KW-0832">Ubl conjugation</keyword>
<dbReference type="EMBL" id="BC112798">
    <property type="protein sequence ID" value="AAI12799.1"/>
    <property type="molecule type" value="mRNA"/>
</dbReference>
<dbReference type="RefSeq" id="NP_001039738.1">
    <property type="nucleotide sequence ID" value="NM_001046273.2"/>
</dbReference>
<dbReference type="SMR" id="Q2KI22"/>
<dbReference type="FunCoup" id="Q2KI22">
    <property type="interactions" value="1286"/>
</dbReference>
<dbReference type="STRING" id="9913.ENSBTAP00000023277"/>
<dbReference type="PaxDb" id="9913-ENSBTAP00000023277"/>
<dbReference type="GeneID" id="524530"/>
<dbReference type="KEGG" id="bta:524530"/>
<dbReference type="CTD" id="595"/>
<dbReference type="eggNOG" id="KOG0656">
    <property type="taxonomic scope" value="Eukaryota"/>
</dbReference>
<dbReference type="HOGENOM" id="CLU_052190_0_0_1"/>
<dbReference type="InParanoid" id="Q2KI22"/>
<dbReference type="OrthoDB" id="306099at2759"/>
<dbReference type="TreeFam" id="TF101004"/>
<dbReference type="Proteomes" id="UP000009136">
    <property type="component" value="Unplaced"/>
</dbReference>
<dbReference type="GO" id="GO:0000307">
    <property type="term" value="C:cyclin-dependent protein kinase holoenzyme complex"/>
    <property type="evidence" value="ECO:0000250"/>
    <property type="project" value="UniProtKB"/>
</dbReference>
<dbReference type="GO" id="GO:0005737">
    <property type="term" value="C:cytoplasm"/>
    <property type="evidence" value="ECO:0000318"/>
    <property type="project" value="GO_Central"/>
</dbReference>
<dbReference type="GO" id="GO:0005815">
    <property type="term" value="C:microtubule organizing center"/>
    <property type="evidence" value="ECO:0000318"/>
    <property type="project" value="GO_Central"/>
</dbReference>
<dbReference type="GO" id="GO:0031965">
    <property type="term" value="C:nuclear membrane"/>
    <property type="evidence" value="ECO:0007669"/>
    <property type="project" value="UniProtKB-SubCell"/>
</dbReference>
<dbReference type="GO" id="GO:0005634">
    <property type="term" value="C:nucleus"/>
    <property type="evidence" value="ECO:0000250"/>
    <property type="project" value="UniProtKB"/>
</dbReference>
<dbReference type="GO" id="GO:0017053">
    <property type="term" value="C:transcription repressor complex"/>
    <property type="evidence" value="ECO:0000250"/>
    <property type="project" value="UniProtKB"/>
</dbReference>
<dbReference type="GO" id="GO:0016538">
    <property type="term" value="F:cyclin-dependent protein serine/threonine kinase regulator activity"/>
    <property type="evidence" value="ECO:0000318"/>
    <property type="project" value="GO_Central"/>
</dbReference>
<dbReference type="GO" id="GO:0043539">
    <property type="term" value="F:protein serine/threonine kinase activator activity"/>
    <property type="evidence" value="ECO:0000250"/>
    <property type="project" value="UniProtKB"/>
</dbReference>
<dbReference type="GO" id="GO:0003714">
    <property type="term" value="F:transcription corepressor activity"/>
    <property type="evidence" value="ECO:0000250"/>
    <property type="project" value="UniProtKB"/>
</dbReference>
<dbReference type="GO" id="GO:0051301">
    <property type="term" value="P:cell division"/>
    <property type="evidence" value="ECO:0007669"/>
    <property type="project" value="UniProtKB-KW"/>
</dbReference>
<dbReference type="GO" id="GO:0006974">
    <property type="term" value="P:DNA damage response"/>
    <property type="evidence" value="ECO:0000250"/>
    <property type="project" value="UniProtKB"/>
</dbReference>
<dbReference type="GO" id="GO:0000082">
    <property type="term" value="P:G1/S transition of mitotic cell cycle"/>
    <property type="evidence" value="ECO:0000250"/>
    <property type="project" value="UniProtKB"/>
</dbReference>
<dbReference type="GO" id="GO:0031571">
    <property type="term" value="P:mitotic G1 DNA damage checkpoint signaling"/>
    <property type="evidence" value="ECO:0000250"/>
    <property type="project" value="UniProtKB"/>
</dbReference>
<dbReference type="GO" id="GO:0000122">
    <property type="term" value="P:negative regulation of transcription by RNA polymerase II"/>
    <property type="evidence" value="ECO:0000250"/>
    <property type="project" value="UniProtKB"/>
</dbReference>
<dbReference type="GO" id="GO:1900087">
    <property type="term" value="P:positive regulation of G1/S transition of mitotic cell cycle"/>
    <property type="evidence" value="ECO:0000318"/>
    <property type="project" value="GO_Central"/>
</dbReference>
<dbReference type="GO" id="GO:0010971">
    <property type="term" value="P:positive regulation of G2/M transition of mitotic cell cycle"/>
    <property type="evidence" value="ECO:0000250"/>
    <property type="project" value="UniProtKB"/>
</dbReference>
<dbReference type="GO" id="GO:0070141">
    <property type="term" value="P:response to UV-A"/>
    <property type="evidence" value="ECO:0000250"/>
    <property type="project" value="UniProtKB"/>
</dbReference>
<dbReference type="CDD" id="cd20573">
    <property type="entry name" value="CYCLIN_CCND1_rpt1"/>
    <property type="match status" value="1"/>
</dbReference>
<dbReference type="FunFam" id="1.10.472.10:FF:000120">
    <property type="entry name" value="G1/S-specific cyclin-D1"/>
    <property type="match status" value="1"/>
</dbReference>
<dbReference type="Gene3D" id="1.10.472.10">
    <property type="entry name" value="Cyclin-like"/>
    <property type="match status" value="2"/>
</dbReference>
<dbReference type="InterPro" id="IPR039361">
    <property type="entry name" value="Cyclin"/>
</dbReference>
<dbReference type="InterPro" id="IPR013763">
    <property type="entry name" value="Cyclin-like_dom"/>
</dbReference>
<dbReference type="InterPro" id="IPR036915">
    <property type="entry name" value="Cyclin-like_sf"/>
</dbReference>
<dbReference type="InterPro" id="IPR004367">
    <property type="entry name" value="Cyclin_C-dom"/>
</dbReference>
<dbReference type="InterPro" id="IPR006671">
    <property type="entry name" value="Cyclin_N"/>
</dbReference>
<dbReference type="InterPro" id="IPR048258">
    <property type="entry name" value="Cyclins_cyclin-box"/>
</dbReference>
<dbReference type="PANTHER" id="PTHR10177">
    <property type="entry name" value="CYCLINS"/>
    <property type="match status" value="1"/>
</dbReference>
<dbReference type="Pfam" id="PF02984">
    <property type="entry name" value="Cyclin_C"/>
    <property type="match status" value="1"/>
</dbReference>
<dbReference type="Pfam" id="PF00134">
    <property type="entry name" value="Cyclin_N"/>
    <property type="match status" value="1"/>
</dbReference>
<dbReference type="SMART" id="SM00385">
    <property type="entry name" value="CYCLIN"/>
    <property type="match status" value="1"/>
</dbReference>
<dbReference type="SMART" id="SM01332">
    <property type="entry name" value="Cyclin_C"/>
    <property type="match status" value="1"/>
</dbReference>
<dbReference type="SUPFAM" id="SSF47954">
    <property type="entry name" value="Cyclin-like"/>
    <property type="match status" value="2"/>
</dbReference>
<dbReference type="PROSITE" id="PS00292">
    <property type="entry name" value="CYCLINS"/>
    <property type="match status" value="1"/>
</dbReference>